<name>COBS_TREDE</name>
<protein>
    <recommendedName>
        <fullName evidence="1">Adenosylcobinamide-GDP ribazoletransferase</fullName>
        <ecNumber evidence="1">2.7.8.26</ecNumber>
    </recommendedName>
    <alternativeName>
        <fullName evidence="1">Cobalamin synthase</fullName>
    </alternativeName>
    <alternativeName>
        <fullName evidence="1">Cobalamin-5'-phosphate synthase</fullName>
    </alternativeName>
</protein>
<dbReference type="EC" id="2.7.8.26" evidence="1"/>
<dbReference type="EMBL" id="AE017226">
    <property type="protein sequence ID" value="AAS12901.1"/>
    <property type="molecule type" value="Genomic_DNA"/>
</dbReference>
<dbReference type="RefSeq" id="NP_972982.1">
    <property type="nucleotide sequence ID" value="NC_002967.9"/>
</dbReference>
<dbReference type="RefSeq" id="WP_002680312.1">
    <property type="nucleotide sequence ID" value="NC_002967.9"/>
</dbReference>
<dbReference type="STRING" id="243275.TDE_2383"/>
<dbReference type="PaxDb" id="243275-TDE_2383"/>
<dbReference type="GeneID" id="2740685"/>
<dbReference type="KEGG" id="tde:TDE_2383"/>
<dbReference type="PATRIC" id="fig|243275.7.peg.2251"/>
<dbReference type="eggNOG" id="COG0368">
    <property type="taxonomic scope" value="Bacteria"/>
</dbReference>
<dbReference type="HOGENOM" id="CLU_057426_1_2_12"/>
<dbReference type="OrthoDB" id="9794626at2"/>
<dbReference type="UniPathway" id="UPA00148">
    <property type="reaction ID" value="UER00238"/>
</dbReference>
<dbReference type="Proteomes" id="UP000008212">
    <property type="component" value="Chromosome"/>
</dbReference>
<dbReference type="GO" id="GO:0005886">
    <property type="term" value="C:plasma membrane"/>
    <property type="evidence" value="ECO:0007669"/>
    <property type="project" value="UniProtKB-SubCell"/>
</dbReference>
<dbReference type="GO" id="GO:0051073">
    <property type="term" value="F:adenosylcobinamide-GDP ribazoletransferase activity"/>
    <property type="evidence" value="ECO:0007669"/>
    <property type="project" value="UniProtKB-UniRule"/>
</dbReference>
<dbReference type="GO" id="GO:0008818">
    <property type="term" value="F:cobalamin 5'-phosphate synthase activity"/>
    <property type="evidence" value="ECO:0007669"/>
    <property type="project" value="UniProtKB-UniRule"/>
</dbReference>
<dbReference type="GO" id="GO:0009236">
    <property type="term" value="P:cobalamin biosynthetic process"/>
    <property type="evidence" value="ECO:0007669"/>
    <property type="project" value="UniProtKB-UniRule"/>
</dbReference>
<dbReference type="HAMAP" id="MF_00719">
    <property type="entry name" value="CobS"/>
    <property type="match status" value="1"/>
</dbReference>
<dbReference type="InterPro" id="IPR003805">
    <property type="entry name" value="CobS"/>
</dbReference>
<dbReference type="NCBIfam" id="TIGR00317">
    <property type="entry name" value="cobS"/>
    <property type="match status" value="1"/>
</dbReference>
<dbReference type="PANTHER" id="PTHR34148">
    <property type="entry name" value="ADENOSYLCOBINAMIDE-GDP RIBAZOLETRANSFERASE"/>
    <property type="match status" value="1"/>
</dbReference>
<dbReference type="PANTHER" id="PTHR34148:SF1">
    <property type="entry name" value="ADENOSYLCOBINAMIDE-GDP RIBAZOLETRANSFERASE"/>
    <property type="match status" value="1"/>
</dbReference>
<dbReference type="Pfam" id="PF02654">
    <property type="entry name" value="CobS"/>
    <property type="match status" value="1"/>
</dbReference>
<comment type="function">
    <text evidence="1">Joins adenosylcobinamide-GDP and alpha-ribazole to generate adenosylcobalamin (Ado-cobalamin). Also synthesizes adenosylcobalamin 5'-phosphate from adenosylcobinamide-GDP and alpha-ribazole 5'-phosphate.</text>
</comment>
<comment type="catalytic activity">
    <reaction evidence="1">
        <text>alpha-ribazole + adenosylcob(III)inamide-GDP = adenosylcob(III)alamin + GMP + H(+)</text>
        <dbReference type="Rhea" id="RHEA:16049"/>
        <dbReference type="ChEBI" id="CHEBI:10329"/>
        <dbReference type="ChEBI" id="CHEBI:15378"/>
        <dbReference type="ChEBI" id="CHEBI:18408"/>
        <dbReference type="ChEBI" id="CHEBI:58115"/>
        <dbReference type="ChEBI" id="CHEBI:60487"/>
        <dbReference type="EC" id="2.7.8.26"/>
    </reaction>
</comment>
<comment type="catalytic activity">
    <reaction evidence="1">
        <text>alpha-ribazole 5'-phosphate + adenosylcob(III)inamide-GDP = adenosylcob(III)alamin 5'-phosphate + GMP + H(+)</text>
        <dbReference type="Rhea" id="RHEA:23560"/>
        <dbReference type="ChEBI" id="CHEBI:15378"/>
        <dbReference type="ChEBI" id="CHEBI:57918"/>
        <dbReference type="ChEBI" id="CHEBI:58115"/>
        <dbReference type="ChEBI" id="CHEBI:60487"/>
        <dbReference type="ChEBI" id="CHEBI:60493"/>
        <dbReference type="EC" id="2.7.8.26"/>
    </reaction>
</comment>
<comment type="cofactor">
    <cofactor evidence="1">
        <name>Mg(2+)</name>
        <dbReference type="ChEBI" id="CHEBI:18420"/>
    </cofactor>
</comment>
<comment type="pathway">
    <text evidence="1">Cofactor biosynthesis; adenosylcobalamin biosynthesis; adenosylcobalamin from cob(II)yrinate a,c-diamide: step 7/7.</text>
</comment>
<comment type="subcellular location">
    <subcellularLocation>
        <location evidence="1">Cell inner membrane</location>
        <topology evidence="1">Multi-pass membrane protein</topology>
    </subcellularLocation>
</comment>
<comment type="similarity">
    <text evidence="1">Belongs to the CobS family.</text>
</comment>
<feature type="chain" id="PRO_1000148032" description="Adenosylcobinamide-GDP ribazoletransferase">
    <location>
        <begin position="1"/>
        <end position="260"/>
    </location>
</feature>
<feature type="transmembrane region" description="Helical" evidence="1">
    <location>
        <begin position="31"/>
        <end position="51"/>
    </location>
</feature>
<feature type="transmembrane region" description="Helical" evidence="1">
    <location>
        <begin position="57"/>
        <end position="77"/>
    </location>
</feature>
<feature type="transmembrane region" description="Helical" evidence="1">
    <location>
        <begin position="108"/>
        <end position="128"/>
    </location>
</feature>
<feature type="transmembrane region" description="Helical" evidence="1">
    <location>
        <begin position="131"/>
        <end position="151"/>
    </location>
</feature>
<feature type="transmembrane region" description="Helical" evidence="1">
    <location>
        <begin position="173"/>
        <end position="193"/>
    </location>
</feature>
<feature type="transmembrane region" description="Helical" evidence="1">
    <location>
        <begin position="206"/>
        <end position="226"/>
    </location>
</feature>
<feature type="transmembrane region" description="Helical" evidence="1">
    <location>
        <begin position="240"/>
        <end position="260"/>
    </location>
</feature>
<organism>
    <name type="scientific">Treponema denticola (strain ATCC 35405 / DSM 14222 / CIP 103919 / JCM 8153 / KCTC 15104)</name>
    <dbReference type="NCBI Taxonomy" id="243275"/>
    <lineage>
        <taxon>Bacteria</taxon>
        <taxon>Pseudomonadati</taxon>
        <taxon>Spirochaetota</taxon>
        <taxon>Spirochaetia</taxon>
        <taxon>Spirochaetales</taxon>
        <taxon>Treponemataceae</taxon>
        <taxon>Treponema</taxon>
    </lineage>
</organism>
<proteinExistence type="inferred from homology"/>
<gene>
    <name evidence="1" type="primary">cobS</name>
    <name type="ordered locus">TDE_2383</name>
</gene>
<evidence type="ECO:0000255" key="1">
    <source>
        <dbReference type="HAMAP-Rule" id="MF_00719"/>
    </source>
</evidence>
<keyword id="KW-0997">Cell inner membrane</keyword>
<keyword id="KW-1003">Cell membrane</keyword>
<keyword id="KW-0169">Cobalamin biosynthesis</keyword>
<keyword id="KW-0460">Magnesium</keyword>
<keyword id="KW-0472">Membrane</keyword>
<keyword id="KW-1185">Reference proteome</keyword>
<keyword id="KW-0808">Transferase</keyword>
<keyword id="KW-0812">Transmembrane</keyword>
<keyword id="KW-1133">Transmembrane helix</keyword>
<accession>Q73K39</accession>
<reference key="1">
    <citation type="journal article" date="2004" name="Proc. Natl. Acad. Sci. U.S.A.">
        <title>Comparison of the genome of the oral pathogen Treponema denticola with other spirochete genomes.</title>
        <authorList>
            <person name="Seshadri R."/>
            <person name="Myers G.S.A."/>
            <person name="Tettelin H."/>
            <person name="Eisen J.A."/>
            <person name="Heidelberg J.F."/>
            <person name="Dodson R.J."/>
            <person name="Davidsen T.M."/>
            <person name="DeBoy R.T."/>
            <person name="Fouts D.E."/>
            <person name="Haft D.H."/>
            <person name="Selengut J."/>
            <person name="Ren Q."/>
            <person name="Brinkac L.M."/>
            <person name="Madupu R."/>
            <person name="Kolonay J.F."/>
            <person name="Durkin S.A."/>
            <person name="Daugherty S.C."/>
            <person name="Shetty J."/>
            <person name="Shvartsbeyn A."/>
            <person name="Gebregeorgis E."/>
            <person name="Geer K."/>
            <person name="Tsegaye G."/>
            <person name="Malek J.A."/>
            <person name="Ayodeji B."/>
            <person name="Shatsman S."/>
            <person name="McLeod M.P."/>
            <person name="Smajs D."/>
            <person name="Howell J.K."/>
            <person name="Pal S."/>
            <person name="Amin A."/>
            <person name="Vashisth P."/>
            <person name="McNeill T.Z."/>
            <person name="Xiang Q."/>
            <person name="Sodergren E."/>
            <person name="Baca E."/>
            <person name="Weinstock G.M."/>
            <person name="Norris S.J."/>
            <person name="Fraser C.M."/>
            <person name="Paulsen I.T."/>
        </authorList>
    </citation>
    <scope>NUCLEOTIDE SEQUENCE [LARGE SCALE GENOMIC DNA]</scope>
    <source>
        <strain>ATCC 35405 / DSM 14222 / CIP 103919 / JCM 8153 / KCTC 15104</strain>
    </source>
</reference>
<sequence length="260" mass="29031">MKGFILALQFFTRIPININIDFNEKNIKRAFYFLPLIGGLIAGLVLIPIYFLPQKYIEISGFISLLLYLFLTGSIHLDGVGDTIDGFFSARKKEKILEIMQDPRIGTYGTIGLNVFLLLRYINYSTIIPDAGLLILAGIISRLSGLAVVVFSKPAKDTGLGLLFHKSASKFSFFFWLVLVCFLSLFTPEIAAFSKIQGTFILVERLKYLLLPLTAFILTFIIIRISYKKIGGITGDVNGLIVELTELAVLSTSFFINVHL</sequence>